<gene>
    <name type="ordered locus">RBE_0997</name>
</gene>
<evidence type="ECO:0000255" key="1">
    <source>
        <dbReference type="PROSITE-ProRule" id="PRU00605"/>
    </source>
</evidence>
<evidence type="ECO:0000255" key="2">
    <source>
        <dbReference type="PROSITE-ProRule" id="PRU10055"/>
    </source>
</evidence>
<proteinExistence type="predicted"/>
<reference key="1">
    <citation type="journal article" date="2006" name="PLoS Genet.">
        <title>Genome sequence of Rickettsia bellii illuminates the role of amoebae in gene exchanges between intracellular pathogens.</title>
        <authorList>
            <person name="Ogata H."/>
            <person name="La Scola B."/>
            <person name="Audic S."/>
            <person name="Renesto P."/>
            <person name="Blanc G."/>
            <person name="Robert C."/>
            <person name="Fournier P.-E."/>
            <person name="Claverie J.-M."/>
            <person name="Raoult D."/>
        </authorList>
    </citation>
    <scope>NUCLEOTIDE SEQUENCE [LARGE SCALE GENOMIC DNA]</scope>
    <source>
        <strain>RML369-C</strain>
    </source>
</reference>
<feature type="chain" id="PRO_0000280921" description="Putative ankyrin repeat protein RBE_0997">
    <location>
        <begin position="1"/>
        <end position="614"/>
    </location>
</feature>
<feature type="repeat" description="ANK 1">
    <location>
        <begin position="3"/>
        <end position="32"/>
    </location>
</feature>
<feature type="repeat" description="ANK 2">
    <location>
        <begin position="36"/>
        <end position="65"/>
    </location>
</feature>
<feature type="repeat" description="ANK 3">
    <location>
        <begin position="69"/>
        <end position="98"/>
    </location>
</feature>
<feature type="repeat" description="ANK 4">
    <location>
        <begin position="102"/>
        <end position="131"/>
    </location>
</feature>
<feature type="repeat" description="ANK 5">
    <location>
        <begin position="135"/>
        <end position="164"/>
    </location>
</feature>
<feature type="repeat" description="ANK 6">
    <location>
        <begin position="168"/>
        <end position="197"/>
    </location>
</feature>
<feature type="repeat" description="ANK 7">
    <location>
        <begin position="201"/>
        <end position="231"/>
    </location>
</feature>
<feature type="repeat" description="ANK 8">
    <location>
        <begin position="239"/>
        <end position="268"/>
    </location>
</feature>
<feature type="repeat" description="ANK 9">
    <location>
        <begin position="272"/>
        <end position="301"/>
    </location>
</feature>
<feature type="domain" description="Glutamine amidotransferase type-1" evidence="1">
    <location>
        <begin position="348"/>
        <end position="580"/>
    </location>
</feature>
<feature type="active site" description="Nucleophile" evidence="1 2">
    <location>
        <position position="444"/>
    </location>
</feature>
<feature type="active site" evidence="1">
    <location>
        <position position="547"/>
    </location>
</feature>
<feature type="active site" evidence="1">
    <location>
        <position position="549"/>
    </location>
</feature>
<name>Y997_RICBR</name>
<dbReference type="EMBL" id="CP000087">
    <property type="protein sequence ID" value="ABE05078.1"/>
    <property type="molecule type" value="Genomic_DNA"/>
</dbReference>
<dbReference type="RefSeq" id="WP_011477658.1">
    <property type="nucleotide sequence ID" value="NC_007940.1"/>
</dbReference>
<dbReference type="SMR" id="Q1RHT6"/>
<dbReference type="KEGG" id="rbe:RBE_0997"/>
<dbReference type="eggNOG" id="COG0666">
    <property type="taxonomic scope" value="Bacteria"/>
</dbReference>
<dbReference type="eggNOG" id="COG2071">
    <property type="taxonomic scope" value="Bacteria"/>
</dbReference>
<dbReference type="HOGENOM" id="CLU_444717_0_0_5"/>
<dbReference type="OrthoDB" id="9813383at2"/>
<dbReference type="Proteomes" id="UP000001951">
    <property type="component" value="Chromosome"/>
</dbReference>
<dbReference type="GO" id="GO:0016787">
    <property type="term" value="F:hydrolase activity"/>
    <property type="evidence" value="ECO:0007669"/>
    <property type="project" value="InterPro"/>
</dbReference>
<dbReference type="Gene3D" id="3.40.50.880">
    <property type="match status" value="1"/>
</dbReference>
<dbReference type="Gene3D" id="1.25.40.20">
    <property type="entry name" value="Ankyrin repeat-containing domain"/>
    <property type="match status" value="1"/>
</dbReference>
<dbReference type="InterPro" id="IPR002110">
    <property type="entry name" value="Ankyrin_rpt"/>
</dbReference>
<dbReference type="InterPro" id="IPR036770">
    <property type="entry name" value="Ankyrin_rpt-contain_sf"/>
</dbReference>
<dbReference type="InterPro" id="IPR029062">
    <property type="entry name" value="Class_I_gatase-like"/>
</dbReference>
<dbReference type="InterPro" id="IPR011697">
    <property type="entry name" value="Peptidase_C26"/>
</dbReference>
<dbReference type="PANTHER" id="PTHR24178">
    <property type="entry name" value="MOLTING PROTEIN MLT-4"/>
    <property type="match status" value="1"/>
</dbReference>
<dbReference type="Pfam" id="PF00023">
    <property type="entry name" value="Ank"/>
    <property type="match status" value="1"/>
</dbReference>
<dbReference type="Pfam" id="PF12796">
    <property type="entry name" value="Ank_2"/>
    <property type="match status" value="3"/>
</dbReference>
<dbReference type="Pfam" id="PF07722">
    <property type="entry name" value="Peptidase_C26"/>
    <property type="match status" value="1"/>
</dbReference>
<dbReference type="SMART" id="SM00248">
    <property type="entry name" value="ANK"/>
    <property type="match status" value="9"/>
</dbReference>
<dbReference type="SUPFAM" id="SSF48403">
    <property type="entry name" value="Ankyrin repeat"/>
    <property type="match status" value="2"/>
</dbReference>
<dbReference type="SUPFAM" id="SSF52317">
    <property type="entry name" value="Class I glutamine amidotransferase-like"/>
    <property type="match status" value="1"/>
</dbReference>
<dbReference type="PROSITE" id="PS50297">
    <property type="entry name" value="ANK_REP_REGION"/>
    <property type="match status" value="1"/>
</dbReference>
<dbReference type="PROSITE" id="PS50088">
    <property type="entry name" value="ANK_REPEAT"/>
    <property type="match status" value="5"/>
</dbReference>
<dbReference type="PROSITE" id="PS51273">
    <property type="entry name" value="GATASE_TYPE_1"/>
    <property type="match status" value="1"/>
</dbReference>
<dbReference type="PROSITE" id="PS00572">
    <property type="entry name" value="GLYCOSYL_HYDROL_F1_1"/>
    <property type="match status" value="1"/>
</dbReference>
<keyword id="KW-0040">ANK repeat</keyword>
<keyword id="KW-0315">Glutamine amidotransferase</keyword>
<keyword id="KW-0677">Repeat</keyword>
<organism>
    <name type="scientific">Rickettsia bellii (strain RML369-C)</name>
    <dbReference type="NCBI Taxonomy" id="336407"/>
    <lineage>
        <taxon>Bacteria</taxon>
        <taxon>Pseudomonadati</taxon>
        <taxon>Pseudomonadota</taxon>
        <taxon>Alphaproteobacteria</taxon>
        <taxon>Rickettsiales</taxon>
        <taxon>Rickettsiaceae</taxon>
        <taxon>Rickettsieae</taxon>
        <taxon>Rickettsia</taxon>
        <taxon>belli group</taxon>
    </lineage>
</organism>
<accession>Q1RHT6</accession>
<sequence>MNKDEELLIEAIENDDLKEVQKLLQEGVDPNILDEDDKPCILSAIRNKNLDIVSVLLENGANPNAVDADGEPIISAAIRTKRLDIINILLENRADPNLQPPRKNTILLKAIQSNNLDIVNAFLNKGANLNALDISGYPIFLKAIKSENLEIINALLEKGANPNLVDKDGSPLLFTAINTKNLDIIDALIKMGANVEAKNKDGNTVLNVLLERRGNVNIISLLIENSQDKEKIFNLKNNNGETFLHLAAQQGNSKIFDKYLDYYPTVNITDKAGYTPLYWSKLLGHTEISNKLIERAEELKETVYTKVTRTKFFENLPSIPKIAVSYNSKVRGETSEATRNKLKYQYCNVEDIDYRKIVPESANAEKKINEEIVNEAKRKAKEFLADKDALVIPGNNSSVDPKIAEHFGGQVNLEKNKFDFARSLAEMAMLEVAIEKGMPIMGICGGHQIINAYLKGKIDEVSKHKHDSIIIEPDSELASIIKRNSPTKDILNQEFWGMHNDKVQEIGGKNRLIDNKDLLKVTATNEHREIEATESQFGAPIRTFQFHPEMSKTTYSNAEIIRDKKIFASFVQSAETFMNKKSLGADIKFKVPVKKSFTEMVLNRKEQQNNQRGI</sequence>
<protein>
    <recommendedName>
        <fullName>Putative ankyrin repeat protein RBE_0997</fullName>
    </recommendedName>
</protein>